<dbReference type="EC" id="2.8.1.13" evidence="1"/>
<dbReference type="EMBL" id="CP000939">
    <property type="protein sequence ID" value="ACA44487.1"/>
    <property type="molecule type" value="Genomic_DNA"/>
</dbReference>
<dbReference type="RefSeq" id="WP_015957653.1">
    <property type="nucleotide sequence ID" value="NC_010516.1"/>
</dbReference>
<dbReference type="SMR" id="B1IIY2"/>
<dbReference type="KEGG" id="cbb:CLD_3384"/>
<dbReference type="HOGENOM" id="CLU_035188_0_0_9"/>
<dbReference type="Proteomes" id="UP000008541">
    <property type="component" value="Chromosome"/>
</dbReference>
<dbReference type="GO" id="GO:0005737">
    <property type="term" value="C:cytoplasm"/>
    <property type="evidence" value="ECO:0007669"/>
    <property type="project" value="UniProtKB-SubCell"/>
</dbReference>
<dbReference type="GO" id="GO:0005524">
    <property type="term" value="F:ATP binding"/>
    <property type="evidence" value="ECO:0007669"/>
    <property type="project" value="UniProtKB-KW"/>
</dbReference>
<dbReference type="GO" id="GO:0000049">
    <property type="term" value="F:tRNA binding"/>
    <property type="evidence" value="ECO:0007669"/>
    <property type="project" value="UniProtKB-KW"/>
</dbReference>
<dbReference type="GO" id="GO:0103016">
    <property type="term" value="F:tRNA-uridine 2-sulfurtransferase activity"/>
    <property type="evidence" value="ECO:0007669"/>
    <property type="project" value="UniProtKB-EC"/>
</dbReference>
<dbReference type="GO" id="GO:0002143">
    <property type="term" value="P:tRNA wobble position uridine thiolation"/>
    <property type="evidence" value="ECO:0007669"/>
    <property type="project" value="TreeGrafter"/>
</dbReference>
<dbReference type="CDD" id="cd01998">
    <property type="entry name" value="MnmA_TRMU-like"/>
    <property type="match status" value="1"/>
</dbReference>
<dbReference type="FunFam" id="2.30.30.280:FF:000001">
    <property type="entry name" value="tRNA-specific 2-thiouridylase MnmA"/>
    <property type="match status" value="1"/>
</dbReference>
<dbReference type="FunFam" id="2.40.30.10:FF:000023">
    <property type="entry name" value="tRNA-specific 2-thiouridylase MnmA"/>
    <property type="match status" value="1"/>
</dbReference>
<dbReference type="FunFam" id="3.40.50.620:FF:000115">
    <property type="entry name" value="tRNA-specific 2-thiouridylase MnmA"/>
    <property type="match status" value="1"/>
</dbReference>
<dbReference type="Gene3D" id="2.30.30.280">
    <property type="entry name" value="Adenine nucleotide alpha hydrolases-like domains"/>
    <property type="match status" value="1"/>
</dbReference>
<dbReference type="Gene3D" id="3.40.50.620">
    <property type="entry name" value="HUPs"/>
    <property type="match status" value="1"/>
</dbReference>
<dbReference type="Gene3D" id="2.40.30.10">
    <property type="entry name" value="Translation factors"/>
    <property type="match status" value="1"/>
</dbReference>
<dbReference type="HAMAP" id="MF_00144">
    <property type="entry name" value="tRNA_thiouridyl_MnmA"/>
    <property type="match status" value="1"/>
</dbReference>
<dbReference type="InterPro" id="IPR004506">
    <property type="entry name" value="MnmA-like"/>
</dbReference>
<dbReference type="InterPro" id="IPR046885">
    <property type="entry name" value="MnmA-like_C"/>
</dbReference>
<dbReference type="InterPro" id="IPR046884">
    <property type="entry name" value="MnmA-like_central"/>
</dbReference>
<dbReference type="InterPro" id="IPR023382">
    <property type="entry name" value="MnmA-like_central_sf"/>
</dbReference>
<dbReference type="InterPro" id="IPR014729">
    <property type="entry name" value="Rossmann-like_a/b/a_fold"/>
</dbReference>
<dbReference type="NCBIfam" id="NF001138">
    <property type="entry name" value="PRK00143.1"/>
    <property type="match status" value="1"/>
</dbReference>
<dbReference type="NCBIfam" id="TIGR00420">
    <property type="entry name" value="trmU"/>
    <property type="match status" value="1"/>
</dbReference>
<dbReference type="PANTHER" id="PTHR11933:SF5">
    <property type="entry name" value="MITOCHONDRIAL TRNA-SPECIFIC 2-THIOURIDYLASE 1"/>
    <property type="match status" value="1"/>
</dbReference>
<dbReference type="PANTHER" id="PTHR11933">
    <property type="entry name" value="TRNA 5-METHYLAMINOMETHYL-2-THIOURIDYLATE -METHYLTRANSFERASE"/>
    <property type="match status" value="1"/>
</dbReference>
<dbReference type="Pfam" id="PF03054">
    <property type="entry name" value="tRNA_Me_trans"/>
    <property type="match status" value="1"/>
</dbReference>
<dbReference type="Pfam" id="PF20258">
    <property type="entry name" value="tRNA_Me_trans_C"/>
    <property type="match status" value="1"/>
</dbReference>
<dbReference type="Pfam" id="PF20259">
    <property type="entry name" value="tRNA_Me_trans_M"/>
    <property type="match status" value="1"/>
</dbReference>
<dbReference type="SUPFAM" id="SSF52402">
    <property type="entry name" value="Adenine nucleotide alpha hydrolases-like"/>
    <property type="match status" value="1"/>
</dbReference>
<gene>
    <name evidence="1" type="primary">mnmA2</name>
    <name type="ordered locus">CLD_3384</name>
</gene>
<reference key="1">
    <citation type="journal article" date="2007" name="PLoS ONE">
        <title>Analysis of the neurotoxin complex genes in Clostridium botulinum A1-A4 and B1 strains: BoNT/A3, /Ba4 and /B1 clusters are located within plasmids.</title>
        <authorList>
            <person name="Smith T.J."/>
            <person name="Hill K.K."/>
            <person name="Foley B.T."/>
            <person name="Detter J.C."/>
            <person name="Munk A.C."/>
            <person name="Bruce D.C."/>
            <person name="Doggett N.A."/>
            <person name="Smith L.A."/>
            <person name="Marks J.D."/>
            <person name="Xie G."/>
            <person name="Brettin T.S."/>
        </authorList>
    </citation>
    <scope>NUCLEOTIDE SEQUENCE [LARGE SCALE GENOMIC DNA]</scope>
    <source>
        <strain>Okra / Type B1</strain>
    </source>
</reference>
<proteinExistence type="inferred from homology"/>
<comment type="function">
    <text evidence="1">Catalyzes the 2-thiolation of uridine at the wobble position (U34) of tRNA, leading to the formation of s(2)U34.</text>
</comment>
<comment type="catalytic activity">
    <reaction evidence="1">
        <text>S-sulfanyl-L-cysteinyl-[protein] + uridine(34) in tRNA + AH2 + ATP = 2-thiouridine(34) in tRNA + L-cysteinyl-[protein] + A + AMP + diphosphate + H(+)</text>
        <dbReference type="Rhea" id="RHEA:47032"/>
        <dbReference type="Rhea" id="RHEA-COMP:10131"/>
        <dbReference type="Rhea" id="RHEA-COMP:11726"/>
        <dbReference type="Rhea" id="RHEA-COMP:11727"/>
        <dbReference type="Rhea" id="RHEA-COMP:11728"/>
        <dbReference type="ChEBI" id="CHEBI:13193"/>
        <dbReference type="ChEBI" id="CHEBI:15378"/>
        <dbReference type="ChEBI" id="CHEBI:17499"/>
        <dbReference type="ChEBI" id="CHEBI:29950"/>
        <dbReference type="ChEBI" id="CHEBI:30616"/>
        <dbReference type="ChEBI" id="CHEBI:33019"/>
        <dbReference type="ChEBI" id="CHEBI:61963"/>
        <dbReference type="ChEBI" id="CHEBI:65315"/>
        <dbReference type="ChEBI" id="CHEBI:87170"/>
        <dbReference type="ChEBI" id="CHEBI:456215"/>
        <dbReference type="EC" id="2.8.1.13"/>
    </reaction>
</comment>
<comment type="subcellular location">
    <subcellularLocation>
        <location evidence="1">Cytoplasm</location>
    </subcellularLocation>
</comment>
<comment type="similarity">
    <text evidence="1">Belongs to the MnmA/TRMU family.</text>
</comment>
<sequence length="356" mass="40639">MKKKVLVGMSGGVDSSVAAYLLKEQGYEVIGVTMQIWQDDEEFIEKEGGCCSLSAVADARRVANKIGIPFYVMNFKDAFKRNVIDYFVDEYMEGRTPNPCIACNKFIKFSSFLDKAMAMGIDYVATGHYAIIEKHNDRYIIKKSEDDRKDQTYALYNLTQFQLERTLMPCGQYKKSKIREIAKEIGLRVHNKKDSEEICFIPDNDHGRYIKNRFPNKVREGNFVDKQGNILGTHKGIVYYTIGQRKGLGIAFGKPMYVVDINPFRNEVVLGDLEDLLNTELIAKDINYIPFDTLKDPMEVEAKIRYSQTPSKAIITPIEDGRVRVNFHEKQRAITKGQSVVFYKDDLLIGGGIIEK</sequence>
<feature type="chain" id="PRO_0000349595" description="tRNA-specific 2-thiouridylase MnmA 2">
    <location>
        <begin position="1"/>
        <end position="356"/>
    </location>
</feature>
<feature type="region of interest" description="Interaction with tRNA" evidence="1">
    <location>
        <begin position="149"/>
        <end position="151"/>
    </location>
</feature>
<feature type="region of interest" description="Interaction with tRNA" evidence="1">
    <location>
        <begin position="305"/>
        <end position="306"/>
    </location>
</feature>
<feature type="active site" description="Nucleophile" evidence="1">
    <location>
        <position position="103"/>
    </location>
</feature>
<feature type="active site" description="Cysteine persulfide intermediate" evidence="1">
    <location>
        <position position="199"/>
    </location>
</feature>
<feature type="binding site" evidence="1">
    <location>
        <begin position="8"/>
        <end position="15"/>
    </location>
    <ligand>
        <name>ATP</name>
        <dbReference type="ChEBI" id="CHEBI:30616"/>
    </ligand>
</feature>
<feature type="binding site" evidence="1">
    <location>
        <position position="34"/>
    </location>
    <ligand>
        <name>ATP</name>
        <dbReference type="ChEBI" id="CHEBI:30616"/>
    </ligand>
</feature>
<feature type="binding site" evidence="1">
    <location>
        <position position="127"/>
    </location>
    <ligand>
        <name>ATP</name>
        <dbReference type="ChEBI" id="CHEBI:30616"/>
    </ligand>
</feature>
<feature type="site" description="Interaction with tRNA" evidence="1">
    <location>
        <position position="128"/>
    </location>
</feature>
<feature type="site" description="Interaction with tRNA" evidence="1">
    <location>
        <position position="338"/>
    </location>
</feature>
<feature type="disulfide bond" description="Alternate" evidence="1">
    <location>
        <begin position="103"/>
        <end position="199"/>
    </location>
</feature>
<organism>
    <name type="scientific">Clostridium botulinum (strain Okra / Type B1)</name>
    <dbReference type="NCBI Taxonomy" id="498213"/>
    <lineage>
        <taxon>Bacteria</taxon>
        <taxon>Bacillati</taxon>
        <taxon>Bacillota</taxon>
        <taxon>Clostridia</taxon>
        <taxon>Eubacteriales</taxon>
        <taxon>Clostridiaceae</taxon>
        <taxon>Clostridium</taxon>
    </lineage>
</organism>
<evidence type="ECO:0000255" key="1">
    <source>
        <dbReference type="HAMAP-Rule" id="MF_00144"/>
    </source>
</evidence>
<keyword id="KW-0067">ATP-binding</keyword>
<keyword id="KW-0963">Cytoplasm</keyword>
<keyword id="KW-1015">Disulfide bond</keyword>
<keyword id="KW-0547">Nucleotide-binding</keyword>
<keyword id="KW-0694">RNA-binding</keyword>
<keyword id="KW-0808">Transferase</keyword>
<keyword id="KW-0819">tRNA processing</keyword>
<keyword id="KW-0820">tRNA-binding</keyword>
<accession>B1IIY2</accession>
<protein>
    <recommendedName>
        <fullName evidence="1">tRNA-specific 2-thiouridylase MnmA 2</fullName>
        <ecNumber evidence="1">2.8.1.13</ecNumber>
    </recommendedName>
</protein>
<name>MNMA2_CLOBK</name>